<organism>
    <name type="scientific">Agrobacterium fabrum (strain C58 / ATCC 33970)</name>
    <name type="common">Agrobacterium tumefaciens (strain C58)</name>
    <dbReference type="NCBI Taxonomy" id="176299"/>
    <lineage>
        <taxon>Bacteria</taxon>
        <taxon>Pseudomonadati</taxon>
        <taxon>Pseudomonadota</taxon>
        <taxon>Alphaproteobacteria</taxon>
        <taxon>Hyphomicrobiales</taxon>
        <taxon>Rhizobiaceae</taxon>
        <taxon>Rhizobium/Agrobacterium group</taxon>
        <taxon>Agrobacterium</taxon>
        <taxon>Agrobacterium tumefaciens complex</taxon>
    </lineage>
</organism>
<comment type="function">
    <text evidence="1">Catalyzes the hydrolysis of the adenine ring of phosphoribosyl-AMP.</text>
</comment>
<comment type="catalytic activity">
    <reaction evidence="1">
        <text>1-(5-phospho-beta-D-ribosyl)-5'-AMP + H2O = 1-(5-phospho-beta-D-ribosyl)-5-[(5-phospho-beta-D-ribosylamino)methylideneamino]imidazole-4-carboxamide</text>
        <dbReference type="Rhea" id="RHEA:20049"/>
        <dbReference type="ChEBI" id="CHEBI:15377"/>
        <dbReference type="ChEBI" id="CHEBI:58435"/>
        <dbReference type="ChEBI" id="CHEBI:59457"/>
        <dbReference type="EC" id="3.5.4.19"/>
    </reaction>
</comment>
<comment type="cofactor">
    <cofactor evidence="1">
        <name>Mg(2+)</name>
        <dbReference type="ChEBI" id="CHEBI:18420"/>
    </cofactor>
    <text evidence="1">Binds 1 Mg(2+) ion per subunit.</text>
</comment>
<comment type="cofactor">
    <cofactor evidence="1">
        <name>Zn(2+)</name>
        <dbReference type="ChEBI" id="CHEBI:29105"/>
    </cofactor>
    <text evidence="1">Binds 1 zinc ion per subunit.</text>
</comment>
<comment type="pathway">
    <text evidence="1">Amino-acid biosynthesis; L-histidine biosynthesis; L-histidine from 5-phospho-alpha-D-ribose 1-diphosphate: step 3/9.</text>
</comment>
<comment type="subunit">
    <text evidence="1">Homodimer.</text>
</comment>
<comment type="subcellular location">
    <subcellularLocation>
        <location evidence="1">Cytoplasm</location>
    </subcellularLocation>
</comment>
<comment type="similarity">
    <text evidence="1">Belongs to the PRA-CH family.</text>
</comment>
<reference key="1">
    <citation type="journal article" date="2001" name="Science">
        <title>The genome of the natural genetic engineer Agrobacterium tumefaciens C58.</title>
        <authorList>
            <person name="Wood D.W."/>
            <person name="Setubal J.C."/>
            <person name="Kaul R."/>
            <person name="Monks D.E."/>
            <person name="Kitajima J.P."/>
            <person name="Okura V.K."/>
            <person name="Zhou Y."/>
            <person name="Chen L."/>
            <person name="Wood G.E."/>
            <person name="Almeida N.F. Jr."/>
            <person name="Woo L."/>
            <person name="Chen Y."/>
            <person name="Paulsen I.T."/>
            <person name="Eisen J.A."/>
            <person name="Karp P.D."/>
            <person name="Bovee D. Sr."/>
            <person name="Chapman P."/>
            <person name="Clendenning J."/>
            <person name="Deatherage G."/>
            <person name="Gillet W."/>
            <person name="Grant C."/>
            <person name="Kutyavin T."/>
            <person name="Levy R."/>
            <person name="Li M.-J."/>
            <person name="McClelland E."/>
            <person name="Palmieri A."/>
            <person name="Raymond C."/>
            <person name="Rouse G."/>
            <person name="Saenphimmachak C."/>
            <person name="Wu Z."/>
            <person name="Romero P."/>
            <person name="Gordon D."/>
            <person name="Zhang S."/>
            <person name="Yoo H."/>
            <person name="Tao Y."/>
            <person name="Biddle P."/>
            <person name="Jung M."/>
            <person name="Krespan W."/>
            <person name="Perry M."/>
            <person name="Gordon-Kamm B."/>
            <person name="Liao L."/>
            <person name="Kim S."/>
            <person name="Hendrick C."/>
            <person name="Zhao Z.-Y."/>
            <person name="Dolan M."/>
            <person name="Chumley F."/>
            <person name="Tingey S.V."/>
            <person name="Tomb J.-F."/>
            <person name="Gordon M.P."/>
            <person name="Olson M.V."/>
            <person name="Nester E.W."/>
        </authorList>
    </citation>
    <scope>NUCLEOTIDE SEQUENCE [LARGE SCALE GENOMIC DNA]</scope>
    <source>
        <strain>C58 / ATCC 33970</strain>
    </source>
</reference>
<reference key="2">
    <citation type="journal article" date="2001" name="Science">
        <title>Genome sequence of the plant pathogen and biotechnology agent Agrobacterium tumefaciens C58.</title>
        <authorList>
            <person name="Goodner B."/>
            <person name="Hinkle G."/>
            <person name="Gattung S."/>
            <person name="Miller N."/>
            <person name="Blanchard M."/>
            <person name="Qurollo B."/>
            <person name="Goldman B.S."/>
            <person name="Cao Y."/>
            <person name="Askenazi M."/>
            <person name="Halling C."/>
            <person name="Mullin L."/>
            <person name="Houmiel K."/>
            <person name="Gordon J."/>
            <person name="Vaudin M."/>
            <person name="Iartchouk O."/>
            <person name="Epp A."/>
            <person name="Liu F."/>
            <person name="Wollam C."/>
            <person name="Allinger M."/>
            <person name="Doughty D."/>
            <person name="Scott C."/>
            <person name="Lappas C."/>
            <person name="Markelz B."/>
            <person name="Flanagan C."/>
            <person name="Crowell C."/>
            <person name="Gurson J."/>
            <person name="Lomo C."/>
            <person name="Sear C."/>
            <person name="Strub G."/>
            <person name="Cielo C."/>
            <person name="Slater S."/>
        </authorList>
    </citation>
    <scope>NUCLEOTIDE SEQUENCE [LARGE SCALE GENOMIC DNA]</scope>
    <source>
        <strain>C58 / ATCC 33970</strain>
    </source>
</reference>
<dbReference type="EC" id="3.5.4.19" evidence="1"/>
<dbReference type="EMBL" id="AE007869">
    <property type="protein sequence ID" value="AAK87520.2"/>
    <property type="molecule type" value="Genomic_DNA"/>
</dbReference>
<dbReference type="PIR" id="AG2791">
    <property type="entry name" value="AG2791"/>
</dbReference>
<dbReference type="PIR" id="G97570">
    <property type="entry name" value="G97570"/>
</dbReference>
<dbReference type="RefSeq" id="NP_354735.2">
    <property type="nucleotide sequence ID" value="NC_003062.2"/>
</dbReference>
<dbReference type="RefSeq" id="WP_010971841.1">
    <property type="nucleotide sequence ID" value="NC_003062.2"/>
</dbReference>
<dbReference type="SMR" id="Q8UEK7"/>
<dbReference type="STRING" id="176299.Atu1750"/>
<dbReference type="EnsemblBacteria" id="AAK87520">
    <property type="protein sequence ID" value="AAK87520"/>
    <property type="gene ID" value="Atu1750"/>
</dbReference>
<dbReference type="GeneID" id="1133788"/>
<dbReference type="KEGG" id="atu:Atu1750"/>
<dbReference type="PATRIC" id="fig|176299.10.peg.1763"/>
<dbReference type="eggNOG" id="COG0139">
    <property type="taxonomic scope" value="Bacteria"/>
</dbReference>
<dbReference type="HOGENOM" id="CLU_048577_5_0_5"/>
<dbReference type="OrthoDB" id="9795769at2"/>
<dbReference type="PhylomeDB" id="Q8UEK7"/>
<dbReference type="BioCyc" id="AGRO:ATU1750-MONOMER"/>
<dbReference type="UniPathway" id="UPA00031">
    <property type="reaction ID" value="UER00008"/>
</dbReference>
<dbReference type="Proteomes" id="UP000000813">
    <property type="component" value="Chromosome circular"/>
</dbReference>
<dbReference type="GO" id="GO:0005737">
    <property type="term" value="C:cytoplasm"/>
    <property type="evidence" value="ECO:0007669"/>
    <property type="project" value="UniProtKB-SubCell"/>
</dbReference>
<dbReference type="GO" id="GO:0000287">
    <property type="term" value="F:magnesium ion binding"/>
    <property type="evidence" value="ECO:0007669"/>
    <property type="project" value="UniProtKB-UniRule"/>
</dbReference>
<dbReference type="GO" id="GO:0004635">
    <property type="term" value="F:phosphoribosyl-AMP cyclohydrolase activity"/>
    <property type="evidence" value="ECO:0007669"/>
    <property type="project" value="UniProtKB-UniRule"/>
</dbReference>
<dbReference type="GO" id="GO:0008270">
    <property type="term" value="F:zinc ion binding"/>
    <property type="evidence" value="ECO:0007669"/>
    <property type="project" value="UniProtKB-UniRule"/>
</dbReference>
<dbReference type="GO" id="GO:0000105">
    <property type="term" value="P:L-histidine biosynthetic process"/>
    <property type="evidence" value="ECO:0007669"/>
    <property type="project" value="UniProtKB-UniRule"/>
</dbReference>
<dbReference type="FunFam" id="3.10.20.810:FF:000001">
    <property type="entry name" value="Histidine biosynthesis bifunctional protein HisIE"/>
    <property type="match status" value="1"/>
</dbReference>
<dbReference type="Gene3D" id="4.10.80.70">
    <property type="match status" value="1"/>
</dbReference>
<dbReference type="Gene3D" id="3.10.20.810">
    <property type="entry name" value="Phosphoribosyl-AMP cyclohydrolase"/>
    <property type="match status" value="1"/>
</dbReference>
<dbReference type="HAMAP" id="MF_01021">
    <property type="entry name" value="HisI"/>
    <property type="match status" value="1"/>
</dbReference>
<dbReference type="InterPro" id="IPR026660">
    <property type="entry name" value="PRA-CH"/>
</dbReference>
<dbReference type="InterPro" id="IPR002496">
    <property type="entry name" value="PRib_AMP_CycHydrolase_dom"/>
</dbReference>
<dbReference type="InterPro" id="IPR038019">
    <property type="entry name" value="PRib_AMP_CycHydrolase_sf"/>
</dbReference>
<dbReference type="NCBIfam" id="NF000768">
    <property type="entry name" value="PRK00051.1"/>
    <property type="match status" value="1"/>
</dbReference>
<dbReference type="PANTHER" id="PTHR42945">
    <property type="entry name" value="HISTIDINE BIOSYNTHESIS BIFUNCTIONAL PROTEIN"/>
    <property type="match status" value="1"/>
</dbReference>
<dbReference type="PANTHER" id="PTHR42945:SF1">
    <property type="entry name" value="HISTIDINE BIOSYNTHESIS BIFUNCTIONAL PROTEIN HIS7"/>
    <property type="match status" value="1"/>
</dbReference>
<dbReference type="Pfam" id="PF01502">
    <property type="entry name" value="PRA-CH"/>
    <property type="match status" value="1"/>
</dbReference>
<dbReference type="SUPFAM" id="SSF141734">
    <property type="entry name" value="HisI-like"/>
    <property type="match status" value="1"/>
</dbReference>
<feature type="chain" id="PRO_0000136456" description="Phosphoribosyl-AMP cyclohydrolase">
    <location>
        <begin position="1"/>
        <end position="150"/>
    </location>
</feature>
<feature type="binding site" evidence="1">
    <location>
        <position position="92"/>
    </location>
    <ligand>
        <name>Mg(2+)</name>
        <dbReference type="ChEBI" id="CHEBI:18420"/>
    </ligand>
</feature>
<feature type="binding site" evidence="1">
    <location>
        <position position="93"/>
    </location>
    <ligand>
        <name>Zn(2+)</name>
        <dbReference type="ChEBI" id="CHEBI:29105"/>
        <note>ligand shared between dimeric partners</note>
    </ligand>
</feature>
<feature type="binding site" evidence="1">
    <location>
        <position position="94"/>
    </location>
    <ligand>
        <name>Mg(2+)</name>
        <dbReference type="ChEBI" id="CHEBI:18420"/>
    </ligand>
</feature>
<feature type="binding site" evidence="1">
    <location>
        <position position="96"/>
    </location>
    <ligand>
        <name>Mg(2+)</name>
        <dbReference type="ChEBI" id="CHEBI:18420"/>
    </ligand>
</feature>
<feature type="binding site" evidence="1">
    <location>
        <position position="111"/>
    </location>
    <ligand>
        <name>Zn(2+)</name>
        <dbReference type="ChEBI" id="CHEBI:29105"/>
        <note>ligand shared between dimeric partners</note>
    </ligand>
</feature>
<feature type="binding site" evidence="1">
    <location>
        <position position="118"/>
    </location>
    <ligand>
        <name>Zn(2+)</name>
        <dbReference type="ChEBI" id="CHEBI:29105"/>
        <note>ligand shared between dimeric partners</note>
    </ligand>
</feature>
<evidence type="ECO:0000255" key="1">
    <source>
        <dbReference type="HAMAP-Rule" id="MF_01021"/>
    </source>
</evidence>
<keyword id="KW-0028">Amino-acid biosynthesis</keyword>
<keyword id="KW-0963">Cytoplasm</keyword>
<keyword id="KW-0368">Histidine biosynthesis</keyword>
<keyword id="KW-0378">Hydrolase</keyword>
<keyword id="KW-0460">Magnesium</keyword>
<keyword id="KW-0479">Metal-binding</keyword>
<keyword id="KW-1185">Reference proteome</keyword>
<keyword id="KW-0862">Zinc</keyword>
<gene>
    <name evidence="1" type="primary">hisI</name>
    <name type="ordered locus">Atu1750</name>
    <name type="ORF">AGR_C_3213</name>
</gene>
<protein>
    <recommendedName>
        <fullName evidence="1">Phosphoribosyl-AMP cyclohydrolase</fullName>
        <shortName evidence="1">PRA-CH</shortName>
        <ecNumber evidence="1">3.5.4.19</ecNumber>
    </recommendedName>
</protein>
<name>HIS3_AGRFC</name>
<proteinExistence type="inferred from homology"/>
<accession>Q8UEK7</accession>
<sequence>MSIPFPSAPADKEALENAGLFSPKFDAHGLVTAVVTDARDGELLMVAHMNAEALSLTLETGIAHYYSRSRDKIWKKGETSGNLQTVKEFRTDCDQDAVWLKVSVAGHDATCHTGRRSCFYRTVELSNGDAVTKITDDTRHFDPATTYSNT</sequence>